<reference key="1">
    <citation type="submission" date="2007-12" db="EMBL/GenBank/DDBJ databases">
        <title>Brucella suis ATCC 23445 whole genome shotgun sequencing project.</title>
        <authorList>
            <person name="Setubal J.C."/>
            <person name="Bowns C."/>
            <person name="Boyle S."/>
            <person name="Crasta O.R."/>
            <person name="Czar M.J."/>
            <person name="Dharmanolla C."/>
            <person name="Gillespie J.J."/>
            <person name="Kenyon R.W."/>
            <person name="Lu J."/>
            <person name="Mane S."/>
            <person name="Mohapatra S."/>
            <person name="Nagrani S."/>
            <person name="Purkayastha A."/>
            <person name="Rajasimha H.K."/>
            <person name="Shallom J.M."/>
            <person name="Shallom S."/>
            <person name="Shukla M."/>
            <person name="Snyder E.E."/>
            <person name="Sobral B.W."/>
            <person name="Wattam A.R."/>
            <person name="Will R."/>
            <person name="Williams K."/>
            <person name="Yoo H."/>
            <person name="Bruce D."/>
            <person name="Detter C."/>
            <person name="Munk C."/>
            <person name="Brettin T.S."/>
        </authorList>
    </citation>
    <scope>NUCLEOTIDE SEQUENCE [LARGE SCALE GENOMIC DNA]</scope>
    <source>
        <strain>ATCC 23445 / NCTC 10510</strain>
    </source>
</reference>
<evidence type="ECO:0000255" key="1">
    <source>
        <dbReference type="HAMAP-Rule" id="MF_00121"/>
    </source>
</evidence>
<proteinExistence type="inferred from homology"/>
<organism>
    <name type="scientific">Brucella suis (strain ATCC 23445 / NCTC 10510)</name>
    <dbReference type="NCBI Taxonomy" id="470137"/>
    <lineage>
        <taxon>Bacteria</taxon>
        <taxon>Pseudomonadati</taxon>
        <taxon>Pseudomonadota</taxon>
        <taxon>Alphaproteobacteria</taxon>
        <taxon>Hyphomicrobiales</taxon>
        <taxon>Brucellaceae</taxon>
        <taxon>Brucella/Ochrobactrum group</taxon>
        <taxon>Brucella</taxon>
    </lineage>
</organism>
<protein>
    <recommendedName>
        <fullName evidence="1">Aspartyl/glutamyl-tRNA(Asn/Gln) amidotransferase subunit B</fullName>
        <shortName evidence="1">Asp/Glu-ADT subunit B</shortName>
        <ecNumber evidence="1">6.3.5.-</ecNumber>
    </recommendedName>
</protein>
<feature type="chain" id="PRO_1000076152" description="Aspartyl/glutamyl-tRNA(Asn/Gln) amidotransferase subunit B">
    <location>
        <begin position="1"/>
        <end position="502"/>
    </location>
</feature>
<accession>B0CLM5</accession>
<comment type="function">
    <text evidence="1">Allows the formation of correctly charged Asn-tRNA(Asn) or Gln-tRNA(Gln) through the transamidation of misacylated Asp-tRNA(Asn) or Glu-tRNA(Gln) in organisms which lack either or both of asparaginyl-tRNA or glutaminyl-tRNA synthetases. The reaction takes place in the presence of glutamine and ATP through an activated phospho-Asp-tRNA(Asn) or phospho-Glu-tRNA(Gln).</text>
</comment>
<comment type="catalytic activity">
    <reaction evidence="1">
        <text>L-glutamyl-tRNA(Gln) + L-glutamine + ATP + H2O = L-glutaminyl-tRNA(Gln) + L-glutamate + ADP + phosphate + H(+)</text>
        <dbReference type="Rhea" id="RHEA:17521"/>
        <dbReference type="Rhea" id="RHEA-COMP:9681"/>
        <dbReference type="Rhea" id="RHEA-COMP:9684"/>
        <dbReference type="ChEBI" id="CHEBI:15377"/>
        <dbReference type="ChEBI" id="CHEBI:15378"/>
        <dbReference type="ChEBI" id="CHEBI:29985"/>
        <dbReference type="ChEBI" id="CHEBI:30616"/>
        <dbReference type="ChEBI" id="CHEBI:43474"/>
        <dbReference type="ChEBI" id="CHEBI:58359"/>
        <dbReference type="ChEBI" id="CHEBI:78520"/>
        <dbReference type="ChEBI" id="CHEBI:78521"/>
        <dbReference type="ChEBI" id="CHEBI:456216"/>
    </reaction>
</comment>
<comment type="catalytic activity">
    <reaction evidence="1">
        <text>L-aspartyl-tRNA(Asn) + L-glutamine + ATP + H2O = L-asparaginyl-tRNA(Asn) + L-glutamate + ADP + phosphate + 2 H(+)</text>
        <dbReference type="Rhea" id="RHEA:14513"/>
        <dbReference type="Rhea" id="RHEA-COMP:9674"/>
        <dbReference type="Rhea" id="RHEA-COMP:9677"/>
        <dbReference type="ChEBI" id="CHEBI:15377"/>
        <dbReference type="ChEBI" id="CHEBI:15378"/>
        <dbReference type="ChEBI" id="CHEBI:29985"/>
        <dbReference type="ChEBI" id="CHEBI:30616"/>
        <dbReference type="ChEBI" id="CHEBI:43474"/>
        <dbReference type="ChEBI" id="CHEBI:58359"/>
        <dbReference type="ChEBI" id="CHEBI:78515"/>
        <dbReference type="ChEBI" id="CHEBI:78516"/>
        <dbReference type="ChEBI" id="CHEBI:456216"/>
    </reaction>
</comment>
<comment type="subunit">
    <text evidence="1">Heterotrimer of A, B and C subunits.</text>
</comment>
<comment type="similarity">
    <text evidence="1">Belongs to the GatB/GatE family. GatB subfamily.</text>
</comment>
<keyword id="KW-0067">ATP-binding</keyword>
<keyword id="KW-0436">Ligase</keyword>
<keyword id="KW-0547">Nucleotide-binding</keyword>
<keyword id="KW-0648">Protein biosynthesis</keyword>
<sequence length="502" mass="54913">MSIIDTRTPEPKRFISGATGDWEVVIGMEVHAQVTSESKLFSGASTAFGAEPNSNVSLVDAAMPGMLPVINLECVRQAVRTGIGLNAQINLKSVFDRKNYFYPDLPQGYQISQFKQPIVGEGKIMISVGPDNKGQFEDVEIGIERLHLEQDAGKSMHDQHPTMSYVDLNRSGVALMEIVSKPDLRSSDEARAYLTKLRTIVRYLGTCDGNMDEGSMRADVNVSVRRPGGEFGTRCEIKNVNSIRFVGQAIEYEARRQIAILEDGGVIDQETRLFDPVKGETRSMRSKEEAHDYRYFPDPDLLPLEFDQAFVDALAAKLPELPDVKKQRLVETLGISVYDASILVTEKAIADYYEAVAEGRDGKAAANWVINDLLGALNKAGKDIEESPISPAQLGAIIDLIKEGTISGKIAKDLFEIVWNEGGDPKKLVEERGMKQVTDTGAIEKAVDDVIAANPDKVEQAKAKAKPTLAGWFVGQVMKATGGKANPQAVNELVKSKLGIEE</sequence>
<gene>
    <name evidence="1" type="primary">gatB</name>
    <name type="ordered locus">BSUIS_A0939</name>
</gene>
<name>GATB_BRUSI</name>
<dbReference type="EC" id="6.3.5.-" evidence="1"/>
<dbReference type="EMBL" id="CP000911">
    <property type="protein sequence ID" value="ABY38005.1"/>
    <property type="molecule type" value="Genomic_DNA"/>
</dbReference>
<dbReference type="RefSeq" id="WP_006072629.1">
    <property type="nucleotide sequence ID" value="NC_010169.1"/>
</dbReference>
<dbReference type="SMR" id="B0CLM5"/>
<dbReference type="KEGG" id="bmt:BSUIS_A0939"/>
<dbReference type="HOGENOM" id="CLU_019240_1_1_5"/>
<dbReference type="Proteomes" id="UP000008545">
    <property type="component" value="Chromosome I"/>
</dbReference>
<dbReference type="GO" id="GO:0050566">
    <property type="term" value="F:asparaginyl-tRNA synthase (glutamine-hydrolyzing) activity"/>
    <property type="evidence" value="ECO:0007669"/>
    <property type="project" value="RHEA"/>
</dbReference>
<dbReference type="GO" id="GO:0005524">
    <property type="term" value="F:ATP binding"/>
    <property type="evidence" value="ECO:0007669"/>
    <property type="project" value="UniProtKB-KW"/>
</dbReference>
<dbReference type="GO" id="GO:0050567">
    <property type="term" value="F:glutaminyl-tRNA synthase (glutamine-hydrolyzing) activity"/>
    <property type="evidence" value="ECO:0007669"/>
    <property type="project" value="UniProtKB-UniRule"/>
</dbReference>
<dbReference type="GO" id="GO:0070681">
    <property type="term" value="P:glutaminyl-tRNAGln biosynthesis via transamidation"/>
    <property type="evidence" value="ECO:0007669"/>
    <property type="project" value="TreeGrafter"/>
</dbReference>
<dbReference type="GO" id="GO:0006412">
    <property type="term" value="P:translation"/>
    <property type="evidence" value="ECO:0007669"/>
    <property type="project" value="UniProtKB-UniRule"/>
</dbReference>
<dbReference type="FunFam" id="1.10.10.410:FF:000001">
    <property type="entry name" value="Aspartyl/glutamyl-tRNA(Asn/Gln) amidotransferase subunit B"/>
    <property type="match status" value="1"/>
</dbReference>
<dbReference type="Gene3D" id="1.10.10.410">
    <property type="match status" value="1"/>
</dbReference>
<dbReference type="Gene3D" id="1.10.150.380">
    <property type="entry name" value="GatB domain, N-terminal subdomain"/>
    <property type="match status" value="1"/>
</dbReference>
<dbReference type="HAMAP" id="MF_00121">
    <property type="entry name" value="GatB"/>
    <property type="match status" value="1"/>
</dbReference>
<dbReference type="InterPro" id="IPR017959">
    <property type="entry name" value="Asn/Gln-tRNA_amidoTrfase_suB/E"/>
</dbReference>
<dbReference type="InterPro" id="IPR006075">
    <property type="entry name" value="Asn/Gln-tRNA_Trfase_suB/E_cat"/>
</dbReference>
<dbReference type="InterPro" id="IPR018027">
    <property type="entry name" value="Asn/Gln_amidotransferase"/>
</dbReference>
<dbReference type="InterPro" id="IPR003789">
    <property type="entry name" value="Asn/Gln_tRNA_amidoTrase-B-like"/>
</dbReference>
<dbReference type="InterPro" id="IPR004413">
    <property type="entry name" value="GatB"/>
</dbReference>
<dbReference type="InterPro" id="IPR042114">
    <property type="entry name" value="GatB_C_1"/>
</dbReference>
<dbReference type="InterPro" id="IPR023168">
    <property type="entry name" value="GatB_Yqey_C_2"/>
</dbReference>
<dbReference type="InterPro" id="IPR017958">
    <property type="entry name" value="Gln-tRNA_amidoTrfase_suB_CS"/>
</dbReference>
<dbReference type="InterPro" id="IPR014746">
    <property type="entry name" value="Gln_synth/guanido_kin_cat_dom"/>
</dbReference>
<dbReference type="NCBIfam" id="TIGR00133">
    <property type="entry name" value="gatB"/>
    <property type="match status" value="1"/>
</dbReference>
<dbReference type="NCBIfam" id="NF004012">
    <property type="entry name" value="PRK05477.1-2"/>
    <property type="match status" value="1"/>
</dbReference>
<dbReference type="NCBIfam" id="NF004014">
    <property type="entry name" value="PRK05477.1-4"/>
    <property type="match status" value="1"/>
</dbReference>
<dbReference type="NCBIfam" id="NF004015">
    <property type="entry name" value="PRK05477.1-5"/>
    <property type="match status" value="1"/>
</dbReference>
<dbReference type="PANTHER" id="PTHR11659">
    <property type="entry name" value="GLUTAMYL-TRNA GLN AMIDOTRANSFERASE SUBUNIT B MITOCHONDRIAL AND PROKARYOTIC PET112-RELATED"/>
    <property type="match status" value="1"/>
</dbReference>
<dbReference type="PANTHER" id="PTHR11659:SF0">
    <property type="entry name" value="GLUTAMYL-TRNA(GLN) AMIDOTRANSFERASE SUBUNIT B, MITOCHONDRIAL"/>
    <property type="match status" value="1"/>
</dbReference>
<dbReference type="Pfam" id="PF02934">
    <property type="entry name" value="GatB_N"/>
    <property type="match status" value="1"/>
</dbReference>
<dbReference type="Pfam" id="PF02637">
    <property type="entry name" value="GatB_Yqey"/>
    <property type="match status" value="1"/>
</dbReference>
<dbReference type="SMART" id="SM00845">
    <property type="entry name" value="GatB_Yqey"/>
    <property type="match status" value="1"/>
</dbReference>
<dbReference type="SUPFAM" id="SSF89095">
    <property type="entry name" value="GatB/YqeY motif"/>
    <property type="match status" value="1"/>
</dbReference>
<dbReference type="SUPFAM" id="SSF55931">
    <property type="entry name" value="Glutamine synthetase/guanido kinase"/>
    <property type="match status" value="1"/>
</dbReference>
<dbReference type="PROSITE" id="PS01234">
    <property type="entry name" value="GATB"/>
    <property type="match status" value="1"/>
</dbReference>